<comment type="function">
    <text evidence="1 4">Pleiotropic regulator of centriole duplication, mitosis, and ciliogenesis (PubMed:32402286). Critical interface between centrosome and microtubule-mediated cellular processes. Centriole duplication protein required for recruitment of CEP63, CEP152, and PLK4 to the centrosome. Independent of its centrosomal targeting, localizes to and interacts with microtubules and regulates microtubule nucleation, stability, and mitotic progression (By similarity).</text>
</comment>
<comment type="subunit">
    <text evidence="1">Interacts with CEP63; the interaction is required for their location to proximal end of centrioles. Interacts with microtubules.</text>
</comment>
<comment type="subcellular location">
    <subcellularLocation>
        <location evidence="1">Cytoplasm</location>
        <location evidence="1">Cytoskeleton</location>
        <location evidence="1">Microtubule organizing center</location>
        <location evidence="1">Centrosome</location>
    </subcellularLocation>
    <subcellularLocation>
        <location evidence="1">Cytoplasm</location>
        <location evidence="1">Cytoskeleton</location>
        <location evidence="1">Microtubule organizing center</location>
        <location evidence="1">Centrosome</location>
        <location evidence="1">Centriolar satellite</location>
    </subcellularLocation>
    <subcellularLocation>
        <location evidence="1">Cytoplasm</location>
        <location evidence="1">Cytoskeleton</location>
        <location evidence="1">Microtubule organizing center</location>
        <location evidence="1">Centrosome</location>
        <location evidence="1">Centriole</location>
    </subcellularLocation>
    <subcellularLocation>
        <location evidence="1">Cytoplasm</location>
        <location evidence="1">Cytoskeleton</location>
        <location evidence="1">Spindle</location>
    </subcellularLocation>
    <text evidence="1">Localizes to resolvable rings at the proximal end of centrioles. In mitotic cells, localizes to spindle microtubules during metaphase.</text>
</comment>
<sequence length="1016" mass="116194">MLPLCSERELNELLARKEEEWRVLQAHRAQLQEAALQAAQNRLEETQGKLQRLQEDFVYNLQVLEERDRELERYDVEFTQARQREEAQQAEASELKIEVAKLKQDLTREARRVGELQHQHQLMLQEHRLELERVHSDKNSELAHQREQNERLEWELERKLKELDGELALQRQELLLEFESKMQRREHEFQLRADDMSNVVLTHELKIKLLNKELQALRDAGARAAESLQKAEAEHVELERKLQERARELQDLEAVKDARIKGLEKKLYSAQLAKKKAEETFRRKHEELDRQAREKDTVLAAVKRAHAEELQTLDAKVLELQFLCETLEGQLRRAECTRAEDAKEKNALTDKFREDAAALKAAWDAQITQMSKETVSKDFQIHTLQEEEMKLKAQVARFQQDIDRYKQQLSLAVERGQSLEREQVQLGLDWQRRCDDIERDQIQKSETLIEGLTKARDQVAAKLQETEKALRQQETLLKAVSLERDQAMETLRTHGLLPGQEAQVPPQQHEGEIRADSPSTEIQRLQEQNAGLRNAVSQMRREMEMLSGHLPPAQPEECSNADPDPKAGGDSTPPDYVLTLEAEMQNLKHKLKALEEQLQSTEEPVKTSVATADPHHGVHSSAAAADAALADQTSTALALRKLGDRVHLLNLLVTQLKRKLRQKPRELVPVQHEVPSEVDQVHLEVLELQKQVAELRKHLKVTPQGEPSSREQLQRQGVADRYPMGMEDQTESPTFPQEGAQPPQTIYVTHLQRKLKDAARKILSLRLEREQLLEMGNRLRAEQGHAKGKPTPCPGPPTSEPQDPQEVPERSLDRGPPLGQLQPYSTTQDPRHTKRRCASEYAGKSQPHSAQVGSKTNTPRGHKAEMASRPAQLSQKQHRIPTETWKPVYQKENRTPKLPQAHEVPEESDHRTHRSSSLASSSLQDIWRLLELGSSPSGVPSQDNSVAECPAPSRPSCFQKVNRSPVPIQKAFAVKGLKMEAQPKATPPRPSKSHPAKPTNCQQQRPSRIRNYNLKD</sequence>
<accession>Q6PHN1</accession>
<name>CCD57_MOUSE</name>
<dbReference type="EMBL" id="AL662901">
    <property type="status" value="NOT_ANNOTATED_CDS"/>
    <property type="molecule type" value="Genomic_DNA"/>
</dbReference>
<dbReference type="EMBL" id="AL663090">
    <property type="status" value="NOT_ANNOTATED_CDS"/>
    <property type="molecule type" value="Genomic_DNA"/>
</dbReference>
<dbReference type="EMBL" id="BC056480">
    <property type="protein sequence ID" value="AAH56480.1"/>
    <property type="molecule type" value="mRNA"/>
</dbReference>
<dbReference type="CCDS" id="CCDS25760.1"/>
<dbReference type="RefSeq" id="NP_082021.1">
    <property type="nucleotide sequence ID" value="NM_027745.2"/>
</dbReference>
<dbReference type="RefSeq" id="XP_017170256.1">
    <property type="nucleotide sequence ID" value="XM_017314767.3"/>
</dbReference>
<dbReference type="SMR" id="Q6PHN1"/>
<dbReference type="FunCoup" id="Q6PHN1">
    <property type="interactions" value="261"/>
</dbReference>
<dbReference type="STRING" id="10090.ENSMUSP00000050996"/>
<dbReference type="iPTMnet" id="Q6PHN1"/>
<dbReference type="PhosphoSitePlus" id="Q6PHN1"/>
<dbReference type="PaxDb" id="10090-ENSMUSP00000050996"/>
<dbReference type="ProteomicsDB" id="265711"/>
<dbReference type="Antibodypedia" id="19887">
    <property type="antibodies" value="56 antibodies from 10 providers"/>
</dbReference>
<dbReference type="Ensembl" id="ENSMUST00000056781.5">
    <property type="protein sequence ID" value="ENSMUSP00000050996.5"/>
    <property type="gene ID" value="ENSMUSG00000048445.7"/>
</dbReference>
<dbReference type="GeneID" id="71276"/>
<dbReference type="KEGG" id="mmu:71276"/>
<dbReference type="UCSC" id="uc007muv.1">
    <property type="organism name" value="mouse"/>
</dbReference>
<dbReference type="AGR" id="MGI:1918526"/>
<dbReference type="CTD" id="284001"/>
<dbReference type="MGI" id="MGI:1918526">
    <property type="gene designation" value="Ccdc57"/>
</dbReference>
<dbReference type="VEuPathDB" id="HostDB:ENSMUSG00000048445"/>
<dbReference type="eggNOG" id="ENOG502QSW3">
    <property type="taxonomic scope" value="Eukaryota"/>
</dbReference>
<dbReference type="GeneTree" id="ENSGT00940000153251"/>
<dbReference type="HOGENOM" id="CLU_011424_1_0_1"/>
<dbReference type="InParanoid" id="Q6PHN1"/>
<dbReference type="OMA" id="RNLKHKF"/>
<dbReference type="OrthoDB" id="568502at2759"/>
<dbReference type="PhylomeDB" id="Q6PHN1"/>
<dbReference type="TreeFam" id="TF333001"/>
<dbReference type="BioGRID-ORCS" id="71276">
    <property type="hits" value="2 hits in 78 CRISPR screens"/>
</dbReference>
<dbReference type="ChiTaRS" id="Ccdc57">
    <property type="organism name" value="mouse"/>
</dbReference>
<dbReference type="PRO" id="PR:Q6PHN1"/>
<dbReference type="Proteomes" id="UP000000589">
    <property type="component" value="Chromosome 11"/>
</dbReference>
<dbReference type="RNAct" id="Q6PHN1">
    <property type="molecule type" value="protein"/>
</dbReference>
<dbReference type="Bgee" id="ENSMUSG00000048445">
    <property type="expression patterns" value="Expressed in seminiferous tubule of testis and 78 other cell types or tissues"/>
</dbReference>
<dbReference type="GO" id="GO:0034451">
    <property type="term" value="C:centriolar satellite"/>
    <property type="evidence" value="ECO:0000250"/>
    <property type="project" value="UniProtKB"/>
</dbReference>
<dbReference type="GO" id="GO:0005814">
    <property type="term" value="C:centriole"/>
    <property type="evidence" value="ECO:0000250"/>
    <property type="project" value="UniProtKB"/>
</dbReference>
<dbReference type="GO" id="GO:0005813">
    <property type="term" value="C:centrosome"/>
    <property type="evidence" value="ECO:0000250"/>
    <property type="project" value="UniProtKB"/>
</dbReference>
<dbReference type="GO" id="GO:0005737">
    <property type="term" value="C:cytoplasm"/>
    <property type="evidence" value="ECO:0007669"/>
    <property type="project" value="UniProtKB-KW"/>
</dbReference>
<dbReference type="GO" id="GO:0005876">
    <property type="term" value="C:spindle microtubule"/>
    <property type="evidence" value="ECO:0000250"/>
    <property type="project" value="UniProtKB"/>
</dbReference>
<dbReference type="GO" id="GO:0007099">
    <property type="term" value="P:centriole replication"/>
    <property type="evidence" value="ECO:0000250"/>
    <property type="project" value="UniProtKB"/>
</dbReference>
<dbReference type="GO" id="GO:0060271">
    <property type="term" value="P:cilium assembly"/>
    <property type="evidence" value="ECO:0000315"/>
    <property type="project" value="UniProtKB"/>
</dbReference>
<dbReference type="GO" id="GO:0000086">
    <property type="term" value="P:G2/M transition of mitotic cell cycle"/>
    <property type="evidence" value="ECO:0000250"/>
    <property type="project" value="UniProtKB"/>
</dbReference>
<dbReference type="GO" id="GO:0007020">
    <property type="term" value="P:microtubule nucleation"/>
    <property type="evidence" value="ECO:0000250"/>
    <property type="project" value="UniProtKB"/>
</dbReference>
<dbReference type="GO" id="GO:0045931">
    <property type="term" value="P:positive regulation of mitotic cell cycle"/>
    <property type="evidence" value="ECO:0000250"/>
    <property type="project" value="UniProtKB"/>
</dbReference>
<dbReference type="InterPro" id="IPR042481">
    <property type="entry name" value="CCDC57"/>
</dbReference>
<dbReference type="PANTHER" id="PTHR46725">
    <property type="entry name" value="COILED-COIL DOMAIN-CONTAINING PROTEIN 57"/>
    <property type="match status" value="1"/>
</dbReference>
<dbReference type="PANTHER" id="PTHR46725:SF1">
    <property type="entry name" value="COILED-COIL DOMAIN-CONTAINING PROTEIN 57"/>
    <property type="match status" value="1"/>
</dbReference>
<gene>
    <name evidence="6" type="primary">Ccdc57</name>
</gene>
<keyword id="KW-0175">Coiled coil</keyword>
<keyword id="KW-0963">Cytoplasm</keyword>
<keyword id="KW-0206">Cytoskeleton</keyword>
<keyword id="KW-1185">Reference proteome</keyword>
<organism>
    <name type="scientific">Mus musculus</name>
    <name type="common">Mouse</name>
    <dbReference type="NCBI Taxonomy" id="10090"/>
    <lineage>
        <taxon>Eukaryota</taxon>
        <taxon>Metazoa</taxon>
        <taxon>Chordata</taxon>
        <taxon>Craniata</taxon>
        <taxon>Vertebrata</taxon>
        <taxon>Euteleostomi</taxon>
        <taxon>Mammalia</taxon>
        <taxon>Eutheria</taxon>
        <taxon>Euarchontoglires</taxon>
        <taxon>Glires</taxon>
        <taxon>Rodentia</taxon>
        <taxon>Myomorpha</taxon>
        <taxon>Muroidea</taxon>
        <taxon>Muridae</taxon>
        <taxon>Murinae</taxon>
        <taxon>Mus</taxon>
        <taxon>Mus</taxon>
    </lineage>
</organism>
<feature type="chain" id="PRO_0000288872" description="Coiled-coil domain-containing protein 57">
    <location>
        <begin position="1"/>
        <end position="1016"/>
    </location>
</feature>
<feature type="region of interest" description="Centrosomal targeting domain" evidence="1">
    <location>
        <begin position="1"/>
        <end position="503"/>
    </location>
</feature>
<feature type="region of interest" description="Disordered" evidence="3">
    <location>
        <begin position="500"/>
        <end position="519"/>
    </location>
</feature>
<feature type="region of interest" description="Disordered" evidence="3">
    <location>
        <begin position="549"/>
        <end position="573"/>
    </location>
</feature>
<feature type="region of interest" description="Microtubule binding domain" evidence="1">
    <location>
        <begin position="604"/>
        <end position="1016"/>
    </location>
</feature>
<feature type="region of interest" description="Disordered" evidence="3">
    <location>
        <begin position="781"/>
        <end position="921"/>
    </location>
</feature>
<feature type="region of interest" description="Disordered" evidence="3">
    <location>
        <begin position="933"/>
        <end position="1016"/>
    </location>
</feature>
<feature type="coiled-coil region" evidence="2">
    <location>
        <begin position="14"/>
        <end position="607"/>
    </location>
</feature>
<feature type="coiled-coil region" evidence="2">
    <location>
        <begin position="676"/>
        <end position="700"/>
    </location>
</feature>
<feature type="coiled-coil region" evidence="2">
    <location>
        <begin position="748"/>
        <end position="775"/>
    </location>
</feature>
<feature type="compositionally biased region" description="Polar residues" evidence="3">
    <location>
        <begin position="846"/>
        <end position="859"/>
    </location>
</feature>
<feature type="compositionally biased region" description="Polar residues" evidence="3">
    <location>
        <begin position="934"/>
        <end position="945"/>
    </location>
</feature>
<protein>
    <recommendedName>
        <fullName evidence="5">Coiled-coil domain-containing protein 57</fullName>
    </recommendedName>
</protein>
<reference key="1">
    <citation type="journal article" date="2009" name="PLoS Biol.">
        <title>Lineage-specific biology revealed by a finished genome assembly of the mouse.</title>
        <authorList>
            <person name="Church D.M."/>
            <person name="Goodstadt L."/>
            <person name="Hillier L.W."/>
            <person name="Zody M.C."/>
            <person name="Goldstein S."/>
            <person name="She X."/>
            <person name="Bult C.J."/>
            <person name="Agarwala R."/>
            <person name="Cherry J.L."/>
            <person name="DiCuccio M."/>
            <person name="Hlavina W."/>
            <person name="Kapustin Y."/>
            <person name="Meric P."/>
            <person name="Maglott D."/>
            <person name="Birtle Z."/>
            <person name="Marques A.C."/>
            <person name="Graves T."/>
            <person name="Zhou S."/>
            <person name="Teague B."/>
            <person name="Potamousis K."/>
            <person name="Churas C."/>
            <person name="Place M."/>
            <person name="Herschleb J."/>
            <person name="Runnheim R."/>
            <person name="Forrest D."/>
            <person name="Amos-Landgraf J."/>
            <person name="Schwartz D.C."/>
            <person name="Cheng Z."/>
            <person name="Lindblad-Toh K."/>
            <person name="Eichler E.E."/>
            <person name="Ponting C.P."/>
        </authorList>
    </citation>
    <scope>NUCLEOTIDE SEQUENCE [LARGE SCALE GENOMIC DNA]</scope>
    <source>
        <strain>C57BL/6J</strain>
    </source>
</reference>
<reference key="2">
    <citation type="journal article" date="2004" name="Genome Res.">
        <title>The status, quality, and expansion of the NIH full-length cDNA project: the Mammalian Gene Collection (MGC).</title>
        <authorList>
            <consortium name="The MGC Project Team"/>
        </authorList>
    </citation>
    <scope>NUCLEOTIDE SEQUENCE [LARGE SCALE MRNA]</scope>
    <source>
        <strain>C57BL/6J</strain>
        <tissue>Brain</tissue>
    </source>
</reference>
<reference key="3">
    <citation type="journal article" date="2010" name="Cell">
        <title>A tissue-specific atlas of mouse protein phosphorylation and expression.</title>
        <authorList>
            <person name="Huttlin E.L."/>
            <person name="Jedrychowski M.P."/>
            <person name="Elias J.E."/>
            <person name="Goswami T."/>
            <person name="Rad R."/>
            <person name="Beausoleil S.A."/>
            <person name="Villen J."/>
            <person name="Haas W."/>
            <person name="Sowa M.E."/>
            <person name="Gygi S.P."/>
        </authorList>
    </citation>
    <scope>IDENTIFICATION BY MASS SPECTROMETRY [LARGE SCALE ANALYSIS]</scope>
    <source>
        <tissue>Testis</tissue>
    </source>
</reference>
<reference key="4">
    <citation type="journal article" date="2020" name="Cell Rep.">
        <title>CCDC57 Cooperates with Microtubules and Microcephaly Protein CEP63 and Regulates Centriole Duplication and Mitotic Progression.</title>
        <authorList>
            <person name="Gurkaslar H.K."/>
            <person name="Culfa E."/>
            <person name="Arslanhan M.D."/>
            <person name="Lince-Faria M."/>
            <person name="Firat-Karalar E.N."/>
        </authorList>
    </citation>
    <scope>FUNCTION</scope>
</reference>
<evidence type="ECO:0000250" key="1">
    <source>
        <dbReference type="UniProtKB" id="Q2TAC2"/>
    </source>
</evidence>
<evidence type="ECO:0000255" key="2"/>
<evidence type="ECO:0000256" key="3">
    <source>
        <dbReference type="SAM" id="MobiDB-lite"/>
    </source>
</evidence>
<evidence type="ECO:0000269" key="4">
    <source>
    </source>
</evidence>
<evidence type="ECO:0000305" key="5"/>
<evidence type="ECO:0000312" key="6">
    <source>
        <dbReference type="MGI" id="MGI:1918526"/>
    </source>
</evidence>
<proteinExistence type="evidence at protein level"/>